<organism>
    <name type="scientific">Streptococcus sanguinis (strain SK36)</name>
    <dbReference type="NCBI Taxonomy" id="388919"/>
    <lineage>
        <taxon>Bacteria</taxon>
        <taxon>Bacillati</taxon>
        <taxon>Bacillota</taxon>
        <taxon>Bacilli</taxon>
        <taxon>Lactobacillales</taxon>
        <taxon>Streptococcaceae</taxon>
        <taxon>Streptococcus</taxon>
    </lineage>
</organism>
<dbReference type="EMBL" id="CP000387">
    <property type="protein sequence ID" value="ABN45603.1"/>
    <property type="molecule type" value="Genomic_DNA"/>
</dbReference>
<dbReference type="RefSeq" id="WP_002894075.1">
    <property type="nucleotide sequence ID" value="NZ_CAXTYR010000002.1"/>
</dbReference>
<dbReference type="RefSeq" id="YP_001036153.1">
    <property type="nucleotide sequence ID" value="NC_009009.1"/>
</dbReference>
<dbReference type="SMR" id="A3CQZ8"/>
<dbReference type="STRING" id="388919.SSA_2241"/>
<dbReference type="KEGG" id="ssa:SSA_2241"/>
<dbReference type="PATRIC" id="fig|388919.9.peg.2123"/>
<dbReference type="eggNOG" id="COG4472">
    <property type="taxonomic scope" value="Bacteria"/>
</dbReference>
<dbReference type="HOGENOM" id="CLU_162466_0_0_9"/>
<dbReference type="OrthoDB" id="9796303at2"/>
<dbReference type="Proteomes" id="UP000002148">
    <property type="component" value="Chromosome"/>
</dbReference>
<dbReference type="HAMAP" id="MF_01507">
    <property type="entry name" value="UPF0297"/>
    <property type="match status" value="1"/>
</dbReference>
<dbReference type="InterPro" id="IPR009309">
    <property type="entry name" value="IreB"/>
</dbReference>
<dbReference type="NCBIfam" id="NF003997">
    <property type="entry name" value="PRK05473.1"/>
    <property type="match status" value="1"/>
</dbReference>
<dbReference type="PANTHER" id="PTHR40067">
    <property type="entry name" value="UPF0297 PROTEIN YRZL"/>
    <property type="match status" value="1"/>
</dbReference>
<dbReference type="PANTHER" id="PTHR40067:SF1">
    <property type="entry name" value="UPF0297 PROTEIN YRZL"/>
    <property type="match status" value="1"/>
</dbReference>
<dbReference type="Pfam" id="PF06135">
    <property type="entry name" value="IreB"/>
    <property type="match status" value="1"/>
</dbReference>
<dbReference type="PIRSF" id="PIRSF037258">
    <property type="entry name" value="DUF965_bac"/>
    <property type="match status" value="1"/>
</dbReference>
<sequence>MGFTDETVRFNLDDSNKKEISETLTDVYKSLNEKGYNPINQIVGYVLSGDPAYVPRYNNARNQIRKYERDEIVEELVRYYLKGQGVDL</sequence>
<reference key="1">
    <citation type="journal article" date="2007" name="J. Bacteriol.">
        <title>Genome of the opportunistic pathogen Streptococcus sanguinis.</title>
        <authorList>
            <person name="Xu P."/>
            <person name="Alves J.M."/>
            <person name="Kitten T."/>
            <person name="Brown A."/>
            <person name="Chen Z."/>
            <person name="Ozaki L.S."/>
            <person name="Manque P."/>
            <person name="Ge X."/>
            <person name="Serrano M.G."/>
            <person name="Puiu D."/>
            <person name="Hendricks S."/>
            <person name="Wang Y."/>
            <person name="Chaplin M.D."/>
            <person name="Akan D."/>
            <person name="Paik S."/>
            <person name="Peterson D.L."/>
            <person name="Macrina F.L."/>
            <person name="Buck G.A."/>
        </authorList>
    </citation>
    <scope>NUCLEOTIDE SEQUENCE [LARGE SCALE GENOMIC DNA]</scope>
    <source>
        <strain>SK36</strain>
    </source>
</reference>
<proteinExistence type="inferred from homology"/>
<keyword id="KW-1185">Reference proteome</keyword>
<comment type="similarity">
    <text evidence="1">Belongs to the UPF0297 family.</text>
</comment>
<protein>
    <recommendedName>
        <fullName evidence="1">UPF0297 protein SSA_2241</fullName>
    </recommendedName>
</protein>
<evidence type="ECO:0000255" key="1">
    <source>
        <dbReference type="HAMAP-Rule" id="MF_01507"/>
    </source>
</evidence>
<accession>A3CQZ8</accession>
<gene>
    <name type="ordered locus">SSA_2241</name>
</gene>
<name>Y2241_STRSV</name>
<feature type="chain" id="PRO_0000289313" description="UPF0297 protein SSA_2241">
    <location>
        <begin position="1"/>
        <end position="88"/>
    </location>
</feature>